<dbReference type="EC" id="2.7.11.1"/>
<dbReference type="EMBL" id="AB007727">
    <property type="protein sequence ID" value="BAB10036.1"/>
    <property type="molecule type" value="Genomic_DNA"/>
</dbReference>
<dbReference type="EMBL" id="CP002688">
    <property type="protein sequence ID" value="AED91771.1"/>
    <property type="molecule type" value="Genomic_DNA"/>
</dbReference>
<dbReference type="EMBL" id="AY072126">
    <property type="protein sequence ID" value="AAL59948.1"/>
    <property type="molecule type" value="mRNA"/>
</dbReference>
<dbReference type="EMBL" id="BT015921">
    <property type="protein sequence ID" value="AAU95457.1"/>
    <property type="molecule type" value="mRNA"/>
</dbReference>
<dbReference type="RefSeq" id="NP_196779.1">
    <property type="nucleotide sequence ID" value="NM_121256.4"/>
</dbReference>
<dbReference type="SMR" id="Q9FMP5"/>
<dbReference type="FunCoup" id="Q9FMP5">
    <property type="interactions" value="1010"/>
</dbReference>
<dbReference type="STRING" id="3702.Q9FMP5"/>
<dbReference type="GlyGen" id="Q9FMP5">
    <property type="glycosylation" value="1 site"/>
</dbReference>
<dbReference type="PaxDb" id="3702-AT5G12180.1"/>
<dbReference type="ProteomicsDB" id="241224"/>
<dbReference type="EnsemblPlants" id="AT5G12180.1">
    <property type="protein sequence ID" value="AT5G12180.1"/>
    <property type="gene ID" value="AT5G12180"/>
</dbReference>
<dbReference type="GeneID" id="831091"/>
<dbReference type="Gramene" id="AT5G12180.1">
    <property type="protein sequence ID" value="AT5G12180.1"/>
    <property type="gene ID" value="AT5G12180"/>
</dbReference>
<dbReference type="KEGG" id="ath:AT5G12180"/>
<dbReference type="Araport" id="AT5G12180"/>
<dbReference type="TAIR" id="AT5G12180">
    <property type="gene designation" value="CPK17"/>
</dbReference>
<dbReference type="eggNOG" id="KOG0032">
    <property type="taxonomic scope" value="Eukaryota"/>
</dbReference>
<dbReference type="HOGENOM" id="CLU_000288_37_4_1"/>
<dbReference type="InParanoid" id="Q9FMP5"/>
<dbReference type="OMA" id="YMTTRVG"/>
<dbReference type="OrthoDB" id="40902at2759"/>
<dbReference type="PhylomeDB" id="Q9FMP5"/>
<dbReference type="PRO" id="PR:Q9FMP5"/>
<dbReference type="Proteomes" id="UP000006548">
    <property type="component" value="Chromosome 5"/>
</dbReference>
<dbReference type="ExpressionAtlas" id="Q9FMP5">
    <property type="expression patterns" value="baseline and differential"/>
</dbReference>
<dbReference type="GO" id="GO:0005737">
    <property type="term" value="C:cytoplasm"/>
    <property type="evidence" value="ECO:0000314"/>
    <property type="project" value="TAIR"/>
</dbReference>
<dbReference type="GO" id="GO:0005886">
    <property type="term" value="C:plasma membrane"/>
    <property type="evidence" value="ECO:0000314"/>
    <property type="project" value="TAIR"/>
</dbReference>
<dbReference type="GO" id="GO:0005524">
    <property type="term" value="F:ATP binding"/>
    <property type="evidence" value="ECO:0007669"/>
    <property type="project" value="UniProtKB-KW"/>
</dbReference>
<dbReference type="GO" id="GO:0005509">
    <property type="term" value="F:calcium ion binding"/>
    <property type="evidence" value="ECO:0007669"/>
    <property type="project" value="InterPro"/>
</dbReference>
<dbReference type="GO" id="GO:0106310">
    <property type="term" value="F:protein serine kinase activity"/>
    <property type="evidence" value="ECO:0007669"/>
    <property type="project" value="RHEA"/>
</dbReference>
<dbReference type="GO" id="GO:0004674">
    <property type="term" value="F:protein serine/threonine kinase activity"/>
    <property type="evidence" value="ECO:0007005"/>
    <property type="project" value="TAIR"/>
</dbReference>
<dbReference type="GO" id="GO:0046777">
    <property type="term" value="P:protein autophosphorylation"/>
    <property type="evidence" value="ECO:0007005"/>
    <property type="project" value="TAIR"/>
</dbReference>
<dbReference type="GO" id="GO:0080092">
    <property type="term" value="P:regulation of pollen tube growth"/>
    <property type="evidence" value="ECO:0000315"/>
    <property type="project" value="TAIR"/>
</dbReference>
<dbReference type="CDD" id="cd05117">
    <property type="entry name" value="STKc_CAMK"/>
    <property type="match status" value="1"/>
</dbReference>
<dbReference type="FunFam" id="1.10.238.10:FF:000015">
    <property type="entry name" value="Calcium-dependent protein kinase 1"/>
    <property type="match status" value="1"/>
</dbReference>
<dbReference type="FunFam" id="3.30.200.20:FF:000004">
    <property type="entry name" value="Calcium-dependent protein kinase 1"/>
    <property type="match status" value="1"/>
</dbReference>
<dbReference type="FunFam" id="1.10.510.10:FF:000056">
    <property type="entry name" value="calcium-dependent protein kinase 1"/>
    <property type="match status" value="1"/>
</dbReference>
<dbReference type="Gene3D" id="1.10.238.10">
    <property type="entry name" value="EF-hand"/>
    <property type="match status" value="1"/>
</dbReference>
<dbReference type="Gene3D" id="3.30.200.20">
    <property type="entry name" value="Phosphorylase Kinase, domain 1"/>
    <property type="match status" value="1"/>
</dbReference>
<dbReference type="Gene3D" id="1.10.510.10">
    <property type="entry name" value="Transferase(Phosphotransferase) domain 1"/>
    <property type="match status" value="1"/>
</dbReference>
<dbReference type="InterPro" id="IPR050205">
    <property type="entry name" value="CDPK_Ser/Thr_kinases"/>
</dbReference>
<dbReference type="InterPro" id="IPR011992">
    <property type="entry name" value="EF-hand-dom_pair"/>
</dbReference>
<dbReference type="InterPro" id="IPR018247">
    <property type="entry name" value="EF_Hand_1_Ca_BS"/>
</dbReference>
<dbReference type="InterPro" id="IPR002048">
    <property type="entry name" value="EF_hand_dom"/>
</dbReference>
<dbReference type="InterPro" id="IPR011009">
    <property type="entry name" value="Kinase-like_dom_sf"/>
</dbReference>
<dbReference type="InterPro" id="IPR000719">
    <property type="entry name" value="Prot_kinase_dom"/>
</dbReference>
<dbReference type="InterPro" id="IPR017441">
    <property type="entry name" value="Protein_kinase_ATP_BS"/>
</dbReference>
<dbReference type="InterPro" id="IPR008271">
    <property type="entry name" value="Ser/Thr_kinase_AS"/>
</dbReference>
<dbReference type="PANTHER" id="PTHR24349">
    <property type="entry name" value="SERINE/THREONINE-PROTEIN KINASE"/>
    <property type="match status" value="1"/>
</dbReference>
<dbReference type="Pfam" id="PF13499">
    <property type="entry name" value="EF-hand_7"/>
    <property type="match status" value="2"/>
</dbReference>
<dbReference type="Pfam" id="PF00069">
    <property type="entry name" value="Pkinase"/>
    <property type="match status" value="1"/>
</dbReference>
<dbReference type="SMART" id="SM00054">
    <property type="entry name" value="EFh"/>
    <property type="match status" value="4"/>
</dbReference>
<dbReference type="SMART" id="SM00220">
    <property type="entry name" value="S_TKc"/>
    <property type="match status" value="1"/>
</dbReference>
<dbReference type="SUPFAM" id="SSF47473">
    <property type="entry name" value="EF-hand"/>
    <property type="match status" value="1"/>
</dbReference>
<dbReference type="SUPFAM" id="SSF56112">
    <property type="entry name" value="Protein kinase-like (PK-like)"/>
    <property type="match status" value="1"/>
</dbReference>
<dbReference type="PROSITE" id="PS00018">
    <property type="entry name" value="EF_HAND_1"/>
    <property type="match status" value="4"/>
</dbReference>
<dbReference type="PROSITE" id="PS50222">
    <property type="entry name" value="EF_HAND_2"/>
    <property type="match status" value="4"/>
</dbReference>
<dbReference type="PROSITE" id="PS00107">
    <property type="entry name" value="PROTEIN_KINASE_ATP"/>
    <property type="match status" value="1"/>
</dbReference>
<dbReference type="PROSITE" id="PS50011">
    <property type="entry name" value="PROTEIN_KINASE_DOM"/>
    <property type="match status" value="1"/>
</dbReference>
<dbReference type="PROSITE" id="PS00108">
    <property type="entry name" value="PROTEIN_KINASE_ST"/>
    <property type="match status" value="1"/>
</dbReference>
<feature type="initiator methionine" description="Removed" evidence="3">
    <location>
        <position position="1"/>
    </location>
</feature>
<feature type="chain" id="PRO_0000363339" description="Calcium-dependent protein kinase 17">
    <location>
        <begin position="2"/>
        <end position="528"/>
    </location>
</feature>
<feature type="domain" description="Protein kinase" evidence="4">
    <location>
        <begin position="73"/>
        <end position="331"/>
    </location>
</feature>
<feature type="domain" description="EF-hand 1" evidence="5">
    <location>
        <begin position="374"/>
        <end position="409"/>
    </location>
</feature>
<feature type="domain" description="EF-hand 2" evidence="5">
    <location>
        <begin position="410"/>
        <end position="445"/>
    </location>
</feature>
<feature type="domain" description="EF-hand 3" evidence="5">
    <location>
        <begin position="446"/>
        <end position="481"/>
    </location>
</feature>
<feature type="domain" description="EF-hand 4" evidence="5">
    <location>
        <begin position="485"/>
        <end position="516"/>
    </location>
</feature>
<feature type="region of interest" description="Disordered" evidence="7">
    <location>
        <begin position="1"/>
        <end position="65"/>
    </location>
</feature>
<feature type="region of interest" description="Autoinhibitory domain" evidence="1">
    <location>
        <begin position="337"/>
        <end position="367"/>
    </location>
</feature>
<feature type="compositionally biased region" description="Low complexity" evidence="7">
    <location>
        <begin position="20"/>
        <end position="45"/>
    </location>
</feature>
<feature type="active site" description="Proton acceptor" evidence="4 6">
    <location>
        <position position="197"/>
    </location>
</feature>
<feature type="binding site" evidence="4">
    <location>
        <begin position="79"/>
        <end position="87"/>
    </location>
    <ligand>
        <name>ATP</name>
        <dbReference type="ChEBI" id="CHEBI:30616"/>
    </ligand>
</feature>
<feature type="binding site" evidence="4">
    <location>
        <position position="102"/>
    </location>
    <ligand>
        <name>ATP</name>
        <dbReference type="ChEBI" id="CHEBI:30616"/>
    </ligand>
</feature>
<feature type="binding site" evidence="5">
    <location>
        <position position="387"/>
    </location>
    <ligand>
        <name>Ca(2+)</name>
        <dbReference type="ChEBI" id="CHEBI:29108"/>
        <label>1</label>
    </ligand>
</feature>
<feature type="binding site" evidence="5">
    <location>
        <position position="389"/>
    </location>
    <ligand>
        <name>Ca(2+)</name>
        <dbReference type="ChEBI" id="CHEBI:29108"/>
        <label>1</label>
    </ligand>
</feature>
<feature type="binding site" evidence="5">
    <location>
        <position position="391"/>
    </location>
    <ligand>
        <name>Ca(2+)</name>
        <dbReference type="ChEBI" id="CHEBI:29108"/>
        <label>1</label>
    </ligand>
</feature>
<feature type="binding site" evidence="5">
    <location>
        <position position="393"/>
    </location>
    <ligand>
        <name>Ca(2+)</name>
        <dbReference type="ChEBI" id="CHEBI:29108"/>
        <label>1</label>
    </ligand>
</feature>
<feature type="binding site" evidence="5">
    <location>
        <position position="398"/>
    </location>
    <ligand>
        <name>Ca(2+)</name>
        <dbReference type="ChEBI" id="CHEBI:29108"/>
        <label>1</label>
    </ligand>
</feature>
<feature type="binding site" evidence="5">
    <location>
        <position position="423"/>
    </location>
    <ligand>
        <name>Ca(2+)</name>
        <dbReference type="ChEBI" id="CHEBI:29108"/>
        <label>2</label>
    </ligand>
</feature>
<feature type="binding site" evidence="5">
    <location>
        <position position="425"/>
    </location>
    <ligand>
        <name>Ca(2+)</name>
        <dbReference type="ChEBI" id="CHEBI:29108"/>
        <label>2</label>
    </ligand>
</feature>
<feature type="binding site" evidence="5">
    <location>
        <position position="427"/>
    </location>
    <ligand>
        <name>Ca(2+)</name>
        <dbReference type="ChEBI" id="CHEBI:29108"/>
        <label>2</label>
    </ligand>
</feature>
<feature type="binding site" evidence="5">
    <location>
        <position position="429"/>
    </location>
    <ligand>
        <name>Ca(2+)</name>
        <dbReference type="ChEBI" id="CHEBI:29108"/>
        <label>2</label>
    </ligand>
</feature>
<feature type="binding site" evidence="5">
    <location>
        <position position="434"/>
    </location>
    <ligand>
        <name>Ca(2+)</name>
        <dbReference type="ChEBI" id="CHEBI:29108"/>
        <label>2</label>
    </ligand>
</feature>
<feature type="binding site" evidence="5">
    <location>
        <position position="459"/>
    </location>
    <ligand>
        <name>Ca(2+)</name>
        <dbReference type="ChEBI" id="CHEBI:29108"/>
        <label>3</label>
    </ligand>
</feature>
<feature type="binding site" evidence="5">
    <location>
        <position position="461"/>
    </location>
    <ligand>
        <name>Ca(2+)</name>
        <dbReference type="ChEBI" id="CHEBI:29108"/>
        <label>3</label>
    </ligand>
</feature>
<feature type="binding site" evidence="5">
    <location>
        <position position="463"/>
    </location>
    <ligand>
        <name>Ca(2+)</name>
        <dbReference type="ChEBI" id="CHEBI:29108"/>
        <label>3</label>
    </ligand>
</feature>
<feature type="binding site" evidence="5">
    <location>
        <position position="465"/>
    </location>
    <ligand>
        <name>Ca(2+)</name>
        <dbReference type="ChEBI" id="CHEBI:29108"/>
        <label>3</label>
    </ligand>
</feature>
<feature type="binding site" evidence="5">
    <location>
        <position position="470"/>
    </location>
    <ligand>
        <name>Ca(2+)</name>
        <dbReference type="ChEBI" id="CHEBI:29108"/>
        <label>3</label>
    </ligand>
</feature>
<feature type="binding site" evidence="5">
    <location>
        <position position="494"/>
    </location>
    <ligand>
        <name>Ca(2+)</name>
        <dbReference type="ChEBI" id="CHEBI:29108"/>
        <label>4</label>
    </ligand>
</feature>
<feature type="binding site" evidence="5">
    <location>
        <position position="496"/>
    </location>
    <ligand>
        <name>Ca(2+)</name>
        <dbReference type="ChEBI" id="CHEBI:29108"/>
        <label>4</label>
    </ligand>
</feature>
<feature type="binding site" evidence="5">
    <location>
        <position position="498"/>
    </location>
    <ligand>
        <name>Ca(2+)</name>
        <dbReference type="ChEBI" id="CHEBI:29108"/>
        <label>4</label>
    </ligand>
</feature>
<feature type="binding site" evidence="5">
    <location>
        <position position="500"/>
    </location>
    <ligand>
        <name>Ca(2+)</name>
        <dbReference type="ChEBI" id="CHEBI:29108"/>
        <label>4</label>
    </ligand>
</feature>
<feature type="binding site" evidence="5">
    <location>
        <position position="505"/>
    </location>
    <ligand>
        <name>Ca(2+)</name>
        <dbReference type="ChEBI" id="CHEBI:29108"/>
        <label>4</label>
    </ligand>
</feature>
<feature type="modified residue" description="Phosphoserine" evidence="2">
    <location>
        <position position="237"/>
    </location>
</feature>
<feature type="lipid moiety-binding region" description="N-myristoyl glycine" evidence="3">
    <location>
        <position position="2"/>
    </location>
</feature>
<feature type="sequence conflict" description="In Ref. 3; AAL59948." evidence="8" ref="3">
    <original>A</original>
    <variation>S</variation>
    <location>
        <position position="94"/>
    </location>
</feature>
<proteinExistence type="evidence at transcript level"/>
<protein>
    <recommendedName>
        <fullName>Calcium-dependent protein kinase 17</fullName>
        <ecNumber>2.7.11.1</ecNumber>
    </recommendedName>
</protein>
<comment type="function">
    <text>May play a role in signal transduction pathways that involve calcium as a second messenger.</text>
</comment>
<comment type="catalytic activity">
    <reaction>
        <text>L-seryl-[protein] + ATP = O-phospho-L-seryl-[protein] + ADP + H(+)</text>
        <dbReference type="Rhea" id="RHEA:17989"/>
        <dbReference type="Rhea" id="RHEA-COMP:9863"/>
        <dbReference type="Rhea" id="RHEA-COMP:11604"/>
        <dbReference type="ChEBI" id="CHEBI:15378"/>
        <dbReference type="ChEBI" id="CHEBI:29999"/>
        <dbReference type="ChEBI" id="CHEBI:30616"/>
        <dbReference type="ChEBI" id="CHEBI:83421"/>
        <dbReference type="ChEBI" id="CHEBI:456216"/>
        <dbReference type="EC" id="2.7.11.1"/>
    </reaction>
</comment>
<comment type="catalytic activity">
    <reaction>
        <text>L-threonyl-[protein] + ATP = O-phospho-L-threonyl-[protein] + ADP + H(+)</text>
        <dbReference type="Rhea" id="RHEA:46608"/>
        <dbReference type="Rhea" id="RHEA-COMP:11060"/>
        <dbReference type="Rhea" id="RHEA-COMP:11605"/>
        <dbReference type="ChEBI" id="CHEBI:15378"/>
        <dbReference type="ChEBI" id="CHEBI:30013"/>
        <dbReference type="ChEBI" id="CHEBI:30616"/>
        <dbReference type="ChEBI" id="CHEBI:61977"/>
        <dbReference type="ChEBI" id="CHEBI:456216"/>
        <dbReference type="EC" id="2.7.11.1"/>
    </reaction>
</comment>
<comment type="activity regulation">
    <text evidence="1">Activated by calcium. Autophosphorylation may play an important role in the regulation of the kinase activity (By similarity).</text>
</comment>
<comment type="subcellular location">
    <subcellularLocation>
        <location evidence="8">Membrane</location>
        <topology evidence="8">Lipid-anchor</topology>
    </subcellularLocation>
</comment>
<comment type="domain">
    <text evidence="1">There are 3 contiguous domains conserved in the CDPK subfamily: a kinase domain, an autoinhibitory (junction) domain and a calmodulin-like domain. The autoinhibitory domain (337-367) inactivates kinase activity under calcium-free conditions (By similarity).</text>
</comment>
<comment type="similarity">
    <text evidence="4">Belongs to the protein kinase superfamily. Ser/Thr protein kinase family. CDPK subfamily.</text>
</comment>
<accession>Q9FMP5</accession>
<accession>Q8VYE7</accession>
<keyword id="KW-0067">ATP-binding</keyword>
<keyword id="KW-0106">Calcium</keyword>
<keyword id="KW-0418">Kinase</keyword>
<keyword id="KW-0449">Lipoprotein</keyword>
<keyword id="KW-0472">Membrane</keyword>
<keyword id="KW-0479">Metal-binding</keyword>
<keyword id="KW-0519">Myristate</keyword>
<keyword id="KW-0547">Nucleotide-binding</keyword>
<keyword id="KW-0597">Phosphoprotein</keyword>
<keyword id="KW-1185">Reference proteome</keyword>
<keyword id="KW-0677">Repeat</keyword>
<keyword id="KW-0723">Serine/threonine-protein kinase</keyword>
<keyword id="KW-0808">Transferase</keyword>
<reference key="1">
    <citation type="journal article" date="1997" name="DNA Res.">
        <title>Structural analysis of Arabidopsis thaliana chromosome 5. III. Sequence features of the regions of 1,191,918 bp covered by seventeen physically assigned P1 clones.</title>
        <authorList>
            <person name="Nakamura Y."/>
            <person name="Sato S."/>
            <person name="Kaneko T."/>
            <person name="Kotani H."/>
            <person name="Asamizu E."/>
            <person name="Miyajima N."/>
            <person name="Tabata S."/>
        </authorList>
    </citation>
    <scope>NUCLEOTIDE SEQUENCE [LARGE SCALE GENOMIC DNA]</scope>
    <source>
        <strain>cv. Columbia</strain>
    </source>
</reference>
<reference key="2">
    <citation type="journal article" date="2017" name="Plant J.">
        <title>Araport11: a complete reannotation of the Arabidopsis thaliana reference genome.</title>
        <authorList>
            <person name="Cheng C.Y."/>
            <person name="Krishnakumar V."/>
            <person name="Chan A.P."/>
            <person name="Thibaud-Nissen F."/>
            <person name="Schobel S."/>
            <person name="Town C.D."/>
        </authorList>
    </citation>
    <scope>GENOME REANNOTATION</scope>
    <source>
        <strain>cv. Columbia</strain>
    </source>
</reference>
<reference key="3">
    <citation type="journal article" date="2003" name="Science">
        <title>Empirical analysis of transcriptional activity in the Arabidopsis genome.</title>
        <authorList>
            <person name="Yamada K."/>
            <person name="Lim J."/>
            <person name="Dale J.M."/>
            <person name="Chen H."/>
            <person name="Shinn P."/>
            <person name="Palm C.J."/>
            <person name="Southwick A.M."/>
            <person name="Wu H.C."/>
            <person name="Kim C.J."/>
            <person name="Nguyen M."/>
            <person name="Pham P.K."/>
            <person name="Cheuk R.F."/>
            <person name="Karlin-Newmann G."/>
            <person name="Liu S.X."/>
            <person name="Lam B."/>
            <person name="Sakano H."/>
            <person name="Wu T."/>
            <person name="Yu G."/>
            <person name="Miranda M."/>
            <person name="Quach H.L."/>
            <person name="Tripp M."/>
            <person name="Chang C.H."/>
            <person name="Lee J.M."/>
            <person name="Toriumi M.J."/>
            <person name="Chan M.M."/>
            <person name="Tang C.C."/>
            <person name="Onodera C.S."/>
            <person name="Deng J.M."/>
            <person name="Akiyama K."/>
            <person name="Ansari Y."/>
            <person name="Arakawa T."/>
            <person name="Banh J."/>
            <person name="Banno F."/>
            <person name="Bowser L."/>
            <person name="Brooks S.Y."/>
            <person name="Carninci P."/>
            <person name="Chao Q."/>
            <person name="Choy N."/>
            <person name="Enju A."/>
            <person name="Goldsmith A.D."/>
            <person name="Gurjal M."/>
            <person name="Hansen N.F."/>
            <person name="Hayashizaki Y."/>
            <person name="Johnson-Hopson C."/>
            <person name="Hsuan V.W."/>
            <person name="Iida K."/>
            <person name="Karnes M."/>
            <person name="Khan S."/>
            <person name="Koesema E."/>
            <person name="Ishida J."/>
            <person name="Jiang P.X."/>
            <person name="Jones T."/>
            <person name="Kawai J."/>
            <person name="Kamiya A."/>
            <person name="Meyers C."/>
            <person name="Nakajima M."/>
            <person name="Narusaka M."/>
            <person name="Seki M."/>
            <person name="Sakurai T."/>
            <person name="Satou M."/>
            <person name="Tamse R."/>
            <person name="Vaysberg M."/>
            <person name="Wallender E.K."/>
            <person name="Wong C."/>
            <person name="Yamamura Y."/>
            <person name="Yuan S."/>
            <person name="Shinozaki K."/>
            <person name="Davis R.W."/>
            <person name="Theologis A."/>
            <person name="Ecker J.R."/>
        </authorList>
    </citation>
    <scope>NUCLEOTIDE SEQUENCE [LARGE SCALE MRNA]</scope>
    <source>
        <strain>cv. Columbia</strain>
    </source>
</reference>
<reference key="4">
    <citation type="submission" date="2004-10" db="EMBL/GenBank/DDBJ databases">
        <title>Arabidopsis ORF clones.</title>
        <authorList>
            <person name="Cheuk R.F."/>
            <person name="Chen H."/>
            <person name="Kim C.J."/>
            <person name="Shinn P."/>
            <person name="Ecker J.R."/>
        </authorList>
    </citation>
    <scope>NUCLEOTIDE SEQUENCE [LARGE SCALE MRNA]</scope>
    <source>
        <strain>cv. Columbia</strain>
    </source>
</reference>
<reference key="5">
    <citation type="journal article" date="2001" name="New Phytol.">
        <title>The CDPK superfamily of protein kinases.</title>
        <authorList>
            <person name="Harmon A.C."/>
            <person name="Gribskov M."/>
            <person name="Gubrium E."/>
            <person name="Harper J.F."/>
        </authorList>
    </citation>
    <scope>GENE FAMILY</scope>
    <scope>NOMENCLATURE</scope>
</reference>
<reference key="6">
    <citation type="journal article" date="2002" name="Plant Physiol.">
        <title>Calcium signaling through protein kinases. The Arabidopsis calcium-dependent protein kinase gene family.</title>
        <authorList>
            <person name="Cheng S.-H."/>
            <person name="Willmann M.R."/>
            <person name="Chen H.-C."/>
            <person name="Sheen J."/>
        </authorList>
    </citation>
    <scope>GENE FAMILY</scope>
    <scope>NOMENCLATURE</scope>
</reference>
<reference key="7">
    <citation type="journal article" date="2003" name="Plant Physiol.">
        <title>The Arabidopsis CDPK-SnRK superfamily of protein kinases.</title>
        <authorList>
            <person name="Hrabak E.M."/>
            <person name="Chan C.W.M."/>
            <person name="Gribskov M."/>
            <person name="Harper J.F."/>
            <person name="Choi J.H."/>
            <person name="Halford N."/>
            <person name="Kudla J."/>
            <person name="Luan S."/>
            <person name="Nimmo H.G."/>
            <person name="Sussman M.R."/>
            <person name="Thomas M."/>
            <person name="Walker-Simmons K."/>
            <person name="Zhu J.-K."/>
            <person name="Harmon A.C."/>
        </authorList>
    </citation>
    <scope>GENE FAMILY</scope>
    <scope>NOMENCLATURE</scope>
</reference>
<sequence length="528" mass="58484">MGNCCSHGRDSADNGDALENGASASNAANSTGPTAEASVPQSKHAPPSPPPATKQGPIGPVLGRPMEDVKASYSLGKELGRGQFGVTHLCTQKATGHQFACKTIAKRKLVNKEDIEDVRREVQIMHHLTGQPNIVELKGAYEDKHSVHLVMELCAGGELFDRIIAKGHYSERAAASLLRTIVQIVHTCHSMGVIHRDLKPENFLLLNKDENSPLKATDFGLSVFYKPGEVFKDIVGSAYYIAPEVLKRKYGPEADIWSIGVMLYILLCGVPPFWAESENGIFNAILRGHVDFSSDPWPSISPQAKDLVKKMLNSDPKQRLTAAQVLNHPWIKEDGEAPDVPLDNAVMSRLKQFKAMNNFKKVALRVIAGCLSEEEIMGLKEMFKGMDTDSSGTITLEELRQGLAKQGTRLSEYEVQQLMEAADADGNGTIDYGEFIAATMHINRLDREEHLYSAFQHFDKDNSGYITMEELEQALREFGMNDGRDIKEIISEVDGDNDGRINYDEFVAMMRKGNPDPIPKKRRELSFK</sequence>
<evidence type="ECO:0000250" key="1"/>
<evidence type="ECO:0000250" key="2">
    <source>
        <dbReference type="UniProtKB" id="Q9FKW4"/>
    </source>
</evidence>
<evidence type="ECO:0000255" key="3"/>
<evidence type="ECO:0000255" key="4">
    <source>
        <dbReference type="PROSITE-ProRule" id="PRU00159"/>
    </source>
</evidence>
<evidence type="ECO:0000255" key="5">
    <source>
        <dbReference type="PROSITE-ProRule" id="PRU00448"/>
    </source>
</evidence>
<evidence type="ECO:0000255" key="6">
    <source>
        <dbReference type="PROSITE-ProRule" id="PRU10027"/>
    </source>
</evidence>
<evidence type="ECO:0000256" key="7">
    <source>
        <dbReference type="SAM" id="MobiDB-lite"/>
    </source>
</evidence>
<evidence type="ECO:0000305" key="8"/>
<organism>
    <name type="scientific">Arabidopsis thaliana</name>
    <name type="common">Mouse-ear cress</name>
    <dbReference type="NCBI Taxonomy" id="3702"/>
    <lineage>
        <taxon>Eukaryota</taxon>
        <taxon>Viridiplantae</taxon>
        <taxon>Streptophyta</taxon>
        <taxon>Embryophyta</taxon>
        <taxon>Tracheophyta</taxon>
        <taxon>Spermatophyta</taxon>
        <taxon>Magnoliopsida</taxon>
        <taxon>eudicotyledons</taxon>
        <taxon>Gunneridae</taxon>
        <taxon>Pentapetalae</taxon>
        <taxon>rosids</taxon>
        <taxon>malvids</taxon>
        <taxon>Brassicales</taxon>
        <taxon>Brassicaceae</taxon>
        <taxon>Camelineae</taxon>
        <taxon>Arabidopsis</taxon>
    </lineage>
</organism>
<name>CDPKH_ARATH</name>
<gene>
    <name type="primary">CPK17</name>
    <name type="ordered locus">At5g12180</name>
    <name type="ORF">MXC9.14</name>
</gene>